<comment type="function">
    <text evidence="1">Required for preprotein translocation.</text>
</comment>
<comment type="subunit">
    <text evidence="1">Part of a complex that contains SEC61, SEC62 and SEC63.</text>
</comment>
<comment type="subcellular location">
    <subcellularLocation>
        <location evidence="1">Endoplasmic reticulum membrane</location>
        <topology evidence="1">Multi-pass membrane protein</topology>
    </subcellularLocation>
</comment>
<comment type="similarity">
    <text evidence="4">Belongs to the SEC62 family.</text>
</comment>
<sequence>MAERRRHRKRIQEVGEPFKEEKAVAKYLRFNCPTKSTNMMGHRVDYFIASKAVDCLLDSKWAKAKKGEEALFTTRESVVDYCNRLLKKQFFHRALKVMKMKPDKDTKKEKEKGKAESGKEEEKKSKKESSKDEKTKKEKEKKKDGEKEECKKDETPGTPKKKETKRKFKLEPHEDQVFLDGNEVYVWIYDPVHFKTFAMGLVLVIAVIAATLFPLWPAEMRVGVYYLSVGAGCFVASILLLAVARCILFLIIWLITGGRHHFWFLPNLTADVGFIDSFRPLYTHEYKGPKADLKKEEKSESKKQQKYDSEEKSDSEKKEEEDGKTEATRNSGTEGSGGERHSDTDSDRREDDRSQHSSGNGNDFEMITKEELEQQTDEGDCEEDEDEDTESRPSHEKS</sequence>
<organism>
    <name type="scientific">Gallus gallus</name>
    <name type="common">Chicken</name>
    <dbReference type="NCBI Taxonomy" id="9031"/>
    <lineage>
        <taxon>Eukaryota</taxon>
        <taxon>Metazoa</taxon>
        <taxon>Chordata</taxon>
        <taxon>Craniata</taxon>
        <taxon>Vertebrata</taxon>
        <taxon>Euteleostomi</taxon>
        <taxon>Archelosauria</taxon>
        <taxon>Archosauria</taxon>
        <taxon>Dinosauria</taxon>
        <taxon>Saurischia</taxon>
        <taxon>Theropoda</taxon>
        <taxon>Coelurosauria</taxon>
        <taxon>Aves</taxon>
        <taxon>Neognathae</taxon>
        <taxon>Galloanserae</taxon>
        <taxon>Galliformes</taxon>
        <taxon>Phasianidae</taxon>
        <taxon>Phasianinae</taxon>
        <taxon>Gallus</taxon>
    </lineage>
</organism>
<accession>Q5F3A1</accession>
<gene>
    <name type="primary">SEC62</name>
    <name type="synonym">TLOC1</name>
    <name type="ORF">RCJMB04_25p9</name>
</gene>
<feature type="chain" id="PRO_0000206619" description="Translocation protein SEC62">
    <location>
        <begin position="1"/>
        <end position="398"/>
    </location>
</feature>
<feature type="topological domain" description="Cytoplasmic" evidence="2">
    <location>
        <begin position="1"/>
        <end position="196"/>
    </location>
</feature>
<feature type="transmembrane region" description="Helical" evidence="2">
    <location>
        <begin position="197"/>
        <end position="217"/>
    </location>
</feature>
<feature type="topological domain" description="Lumenal" evidence="2">
    <location>
        <begin position="218"/>
        <end position="234"/>
    </location>
</feature>
<feature type="transmembrane region" description="Helical" evidence="2">
    <location>
        <begin position="235"/>
        <end position="255"/>
    </location>
</feature>
<feature type="topological domain" description="Cytoplasmic" evidence="2">
    <location>
        <begin position="256"/>
        <end position="398"/>
    </location>
</feature>
<feature type="region of interest" description="Disordered" evidence="3">
    <location>
        <begin position="101"/>
        <end position="167"/>
    </location>
</feature>
<feature type="region of interest" description="Disordered" evidence="3">
    <location>
        <begin position="289"/>
        <end position="398"/>
    </location>
</feature>
<feature type="compositionally biased region" description="Basic and acidic residues" evidence="3">
    <location>
        <begin position="101"/>
        <end position="155"/>
    </location>
</feature>
<feature type="compositionally biased region" description="Basic and acidic residues" evidence="3">
    <location>
        <begin position="289"/>
        <end position="327"/>
    </location>
</feature>
<feature type="compositionally biased region" description="Basic and acidic residues" evidence="3">
    <location>
        <begin position="337"/>
        <end position="355"/>
    </location>
</feature>
<feature type="compositionally biased region" description="Acidic residues" evidence="3">
    <location>
        <begin position="373"/>
        <end position="389"/>
    </location>
</feature>
<dbReference type="EMBL" id="AJ851749">
    <property type="protein sequence ID" value="CAH65383.1"/>
    <property type="molecule type" value="mRNA"/>
</dbReference>
<dbReference type="RefSeq" id="NP_001012620.1">
    <property type="nucleotide sequence ID" value="NM_001012602.2"/>
</dbReference>
<dbReference type="SMR" id="Q5F3A1"/>
<dbReference type="FunCoup" id="Q5F3A1">
    <property type="interactions" value="1786"/>
</dbReference>
<dbReference type="STRING" id="9031.ENSGALP00000015260"/>
<dbReference type="PaxDb" id="9031-ENSGALP00000015260"/>
<dbReference type="Ensembl" id="ENSGALT00010040538.1">
    <property type="protein sequence ID" value="ENSGALP00010023533.1"/>
    <property type="gene ID" value="ENSGALG00010016797.1"/>
</dbReference>
<dbReference type="GeneID" id="424993"/>
<dbReference type="KEGG" id="gga:424993"/>
<dbReference type="CTD" id="7095"/>
<dbReference type="VEuPathDB" id="HostDB:geneid_424993"/>
<dbReference type="eggNOG" id="KOG2927">
    <property type="taxonomic scope" value="Eukaryota"/>
</dbReference>
<dbReference type="GeneTree" id="ENSGT00390000002757"/>
<dbReference type="HOGENOM" id="CLU_051910_0_0_1"/>
<dbReference type="InParanoid" id="Q5F3A1"/>
<dbReference type="OMA" id="CLLESPW"/>
<dbReference type="OrthoDB" id="200187at2759"/>
<dbReference type="PhylomeDB" id="Q5F3A1"/>
<dbReference type="TreeFam" id="TF314944"/>
<dbReference type="PRO" id="PR:Q5F3A1"/>
<dbReference type="Proteomes" id="UP000000539">
    <property type="component" value="Chromosome 9"/>
</dbReference>
<dbReference type="Bgee" id="ENSGALG00000009379">
    <property type="expression patterns" value="Expressed in ovary and 14 other cell types or tissues"/>
</dbReference>
<dbReference type="GO" id="GO:0005783">
    <property type="term" value="C:endoplasmic reticulum"/>
    <property type="evidence" value="ECO:0000318"/>
    <property type="project" value="GO_Central"/>
</dbReference>
<dbReference type="GO" id="GO:0005789">
    <property type="term" value="C:endoplasmic reticulum membrane"/>
    <property type="evidence" value="ECO:0007669"/>
    <property type="project" value="UniProtKB-SubCell"/>
</dbReference>
<dbReference type="GO" id="GO:0016020">
    <property type="term" value="C:membrane"/>
    <property type="evidence" value="ECO:0000318"/>
    <property type="project" value="GO_Central"/>
</dbReference>
<dbReference type="GO" id="GO:0031204">
    <property type="term" value="P:post-translational protein targeting to membrane, translocation"/>
    <property type="evidence" value="ECO:0000318"/>
    <property type="project" value="GO_Central"/>
</dbReference>
<dbReference type="InterPro" id="IPR004728">
    <property type="entry name" value="Sec62"/>
</dbReference>
<dbReference type="PANTHER" id="PTHR12443">
    <property type="entry name" value="TRANSLOCATION PROTEIN SEC62"/>
    <property type="match status" value="1"/>
</dbReference>
<dbReference type="PANTHER" id="PTHR12443:SF9">
    <property type="entry name" value="TRANSLOCATION PROTEIN SEC62"/>
    <property type="match status" value="1"/>
</dbReference>
<dbReference type="Pfam" id="PF03839">
    <property type="entry name" value="Sec62"/>
    <property type="match status" value="1"/>
</dbReference>
<evidence type="ECO:0000250" key="1"/>
<evidence type="ECO:0000255" key="2"/>
<evidence type="ECO:0000256" key="3">
    <source>
        <dbReference type="SAM" id="MobiDB-lite"/>
    </source>
</evidence>
<evidence type="ECO:0000305" key="4"/>
<keyword id="KW-0256">Endoplasmic reticulum</keyword>
<keyword id="KW-0472">Membrane</keyword>
<keyword id="KW-0653">Protein transport</keyword>
<keyword id="KW-1185">Reference proteome</keyword>
<keyword id="KW-0811">Translocation</keyword>
<keyword id="KW-0812">Transmembrane</keyword>
<keyword id="KW-1133">Transmembrane helix</keyword>
<keyword id="KW-0813">Transport</keyword>
<name>SEC62_CHICK</name>
<reference key="1">
    <citation type="journal article" date="2005" name="Genome Biol.">
        <title>Full-length cDNAs from chicken bursal lymphocytes to facilitate gene function analysis.</title>
        <authorList>
            <person name="Caldwell R.B."/>
            <person name="Kierzek A.M."/>
            <person name="Arakawa H."/>
            <person name="Bezzubov Y."/>
            <person name="Zaim J."/>
            <person name="Fiedler P."/>
            <person name="Kutter S."/>
            <person name="Blagodatski A."/>
            <person name="Kostovska D."/>
            <person name="Koter M."/>
            <person name="Plachy J."/>
            <person name="Carninci P."/>
            <person name="Hayashizaki Y."/>
            <person name="Buerstedde J.-M."/>
        </authorList>
    </citation>
    <scope>NUCLEOTIDE SEQUENCE [LARGE SCALE MRNA]</scope>
    <source>
        <strain>CB</strain>
        <tissue>Bursa of Fabricius</tissue>
    </source>
</reference>
<protein>
    <recommendedName>
        <fullName>Translocation protein SEC62</fullName>
    </recommendedName>
    <alternativeName>
        <fullName>Translocation protein 1</fullName>
        <shortName>TP-1</shortName>
    </alternativeName>
</protein>
<proteinExistence type="evidence at transcript level"/>